<feature type="chain" id="PRO_0000216038" description="Chalcone synthase E">
    <location>
        <begin position="1"/>
        <end position="389"/>
    </location>
</feature>
<feature type="active site" evidence="1">
    <location>
        <position position="164"/>
    </location>
</feature>
<dbReference type="EC" id="2.3.1.74"/>
<dbReference type="EMBL" id="AB001819">
    <property type="protein sequence ID" value="BAA21788.1"/>
    <property type="molecule type" value="mRNA"/>
</dbReference>
<dbReference type="RefSeq" id="XP_019165608.1">
    <property type="nucleotide sequence ID" value="XM_019310063.1"/>
</dbReference>
<dbReference type="SMR" id="O22046"/>
<dbReference type="GeneID" id="109161594"/>
<dbReference type="KEGG" id="ini:109161594"/>
<dbReference type="OrthoDB" id="1500228at2759"/>
<dbReference type="UniPathway" id="UPA00154"/>
<dbReference type="GO" id="GO:0016210">
    <property type="term" value="F:naringenin-chalcone synthase activity"/>
    <property type="evidence" value="ECO:0007669"/>
    <property type="project" value="UniProtKB-EC"/>
</dbReference>
<dbReference type="GO" id="GO:0009813">
    <property type="term" value="P:flavonoid biosynthetic process"/>
    <property type="evidence" value="ECO:0007669"/>
    <property type="project" value="UniProtKB-UniPathway"/>
</dbReference>
<dbReference type="GO" id="GO:0030639">
    <property type="term" value="P:polyketide biosynthetic process"/>
    <property type="evidence" value="ECO:0007669"/>
    <property type="project" value="TreeGrafter"/>
</dbReference>
<dbReference type="CDD" id="cd00831">
    <property type="entry name" value="CHS_like"/>
    <property type="match status" value="1"/>
</dbReference>
<dbReference type="FunFam" id="3.40.47.10:FF:000014">
    <property type="entry name" value="Chalcone synthase 1"/>
    <property type="match status" value="1"/>
</dbReference>
<dbReference type="FunFam" id="3.40.47.10:FF:000025">
    <property type="entry name" value="Chalcone synthase 2"/>
    <property type="match status" value="1"/>
</dbReference>
<dbReference type="Gene3D" id="3.40.47.10">
    <property type="match status" value="2"/>
</dbReference>
<dbReference type="InterPro" id="IPR012328">
    <property type="entry name" value="Chalcone/stilbene_synt_C"/>
</dbReference>
<dbReference type="InterPro" id="IPR001099">
    <property type="entry name" value="Chalcone/stilbene_synt_N"/>
</dbReference>
<dbReference type="InterPro" id="IPR018088">
    <property type="entry name" value="Chalcone/stilbene_synthase_AS"/>
</dbReference>
<dbReference type="InterPro" id="IPR011141">
    <property type="entry name" value="Polyketide_synthase_type-III"/>
</dbReference>
<dbReference type="InterPro" id="IPR016039">
    <property type="entry name" value="Thiolase-like"/>
</dbReference>
<dbReference type="PANTHER" id="PTHR11877:SF80">
    <property type="entry name" value="CHALCONE SYNTHASE 1"/>
    <property type="match status" value="1"/>
</dbReference>
<dbReference type="PANTHER" id="PTHR11877">
    <property type="entry name" value="HYDROXYMETHYLGLUTARYL-COA SYNTHASE"/>
    <property type="match status" value="1"/>
</dbReference>
<dbReference type="Pfam" id="PF02797">
    <property type="entry name" value="Chal_sti_synt_C"/>
    <property type="match status" value="1"/>
</dbReference>
<dbReference type="Pfam" id="PF00195">
    <property type="entry name" value="Chal_sti_synt_N"/>
    <property type="match status" value="1"/>
</dbReference>
<dbReference type="PIRSF" id="PIRSF000451">
    <property type="entry name" value="PKS_III"/>
    <property type="match status" value="1"/>
</dbReference>
<dbReference type="SUPFAM" id="SSF53901">
    <property type="entry name" value="Thiolase-like"/>
    <property type="match status" value="2"/>
</dbReference>
<dbReference type="PROSITE" id="PS00441">
    <property type="entry name" value="CHALCONE_SYNTH"/>
    <property type="match status" value="1"/>
</dbReference>
<comment type="function">
    <text>The primary product of this enzyme is 4,2',4',6'-tetrahydroxychalcone (also termed naringenin-chalcone or chalcone) which can under specific conditions spontaneously isomerize into naringenin.</text>
</comment>
<comment type="catalytic activity">
    <reaction evidence="1">
        <text>(E)-4-coumaroyl-CoA + 3 malonyl-CoA + 3 H(+) = 2',4,4',6'-tetrahydroxychalcone + 3 CO2 + 4 CoA</text>
        <dbReference type="Rhea" id="RHEA:11128"/>
        <dbReference type="ChEBI" id="CHEBI:15378"/>
        <dbReference type="ChEBI" id="CHEBI:15413"/>
        <dbReference type="ChEBI" id="CHEBI:16526"/>
        <dbReference type="ChEBI" id="CHEBI:57287"/>
        <dbReference type="ChEBI" id="CHEBI:57384"/>
        <dbReference type="ChEBI" id="CHEBI:85008"/>
        <dbReference type="EC" id="2.3.1.74"/>
    </reaction>
</comment>
<comment type="pathway">
    <text>Secondary metabolite biosynthesis; flavonoid biosynthesis.</text>
</comment>
<comment type="similarity">
    <text evidence="2">Belongs to the thiolase-like superfamily. Chalcone/stilbene synthases family.</text>
</comment>
<organism>
    <name type="scientific">Ipomoea nil</name>
    <name type="common">Japanese morning glory</name>
    <name type="synonym">Pharbitis nil</name>
    <dbReference type="NCBI Taxonomy" id="35883"/>
    <lineage>
        <taxon>Eukaryota</taxon>
        <taxon>Viridiplantae</taxon>
        <taxon>Streptophyta</taxon>
        <taxon>Embryophyta</taxon>
        <taxon>Tracheophyta</taxon>
        <taxon>Spermatophyta</taxon>
        <taxon>Magnoliopsida</taxon>
        <taxon>eudicotyledons</taxon>
        <taxon>Gunneridae</taxon>
        <taxon>Pentapetalae</taxon>
        <taxon>asterids</taxon>
        <taxon>lamiids</taxon>
        <taxon>Solanales</taxon>
        <taxon>Convolvulaceae</taxon>
        <taxon>Ipomoeeae</taxon>
        <taxon>Ipomoea</taxon>
    </lineage>
</organism>
<sequence length="389" mass="42685">MVTVEEVRKAQRAQGPATIMAIGTSTPQNCVDQSTYPDYYFRITNSEHLVELKEKFKRMCEKSMIKKRYMYLTEEILKENPNICAYMAPSLDARQDIVVVEVPKLGKEAAQKAIKEWGQPKSKITHLVFCTTSGVDMPGADYQLTKLLGLQPSVKRFMMYQQGCFAGGTVIRLAKDLAENNKGARVLVVCSEITAVTFRGPSDAHLDSLVGQALFGDGAAALIIGSDPDPDLERPLFQLVSAAQTILPDSGGAIDGHLREVGLTFHLLKDVPGLISKHIEKSLNEAFQPLGIHDWNSLFWIAHPGGPAILDQVEEKLELKPEKLRATRHVLSEYGNMSSACVLFILDEMRKASSKEGLNTTGEGLEWGVLFGFGPGLTVETVVLHSVSA</sequence>
<protein>
    <recommendedName>
        <fullName>Chalcone synthase E</fullName>
        <ecNumber>2.3.1.74</ecNumber>
    </recommendedName>
    <alternativeName>
        <fullName>Naringenin-chalcone synthase E</fullName>
        <shortName>CHS-E</shortName>
    </alternativeName>
</protein>
<reference key="1">
    <citation type="journal article" date="1997" name="Plant Cell Physiol.">
        <title>Identification of new chalcone synthase genes for flower pigmentation in the Japanese and common morning glories.</title>
        <authorList>
            <person name="Fukada-Tanaka S."/>
            <person name="Hoshino A."/>
            <person name="Hisatomi Y."/>
            <person name="Habu Y."/>
            <person name="Hasebe M."/>
            <person name="Iida S."/>
        </authorList>
    </citation>
    <scope>NUCLEOTIDE SEQUENCE [MRNA]</scope>
    <source>
        <strain>cv. KK/ZSK-2</strain>
        <tissue>Flower bud</tissue>
    </source>
</reference>
<gene>
    <name type="primary">CHSE</name>
</gene>
<name>CHSE_IPONI</name>
<evidence type="ECO:0000255" key="1">
    <source>
        <dbReference type="PROSITE-ProRule" id="PRU10023"/>
    </source>
</evidence>
<evidence type="ECO:0000305" key="2"/>
<keyword id="KW-0012">Acyltransferase</keyword>
<keyword id="KW-0284">Flavonoid biosynthesis</keyword>
<keyword id="KW-0808">Transferase</keyword>
<proteinExistence type="evidence at transcript level"/>
<accession>O22046</accession>